<protein>
    <recommendedName>
        <fullName evidence="7">Parvalbumin beta 4</fullName>
    </recommendedName>
</protein>
<keyword id="KW-0007">Acetylation</keyword>
<keyword id="KW-0020">Allergen</keyword>
<keyword id="KW-0106">Calcium</keyword>
<keyword id="KW-0903">Direct protein sequencing</keyword>
<keyword id="KW-0479">Metal-binding</keyword>
<keyword id="KW-0514">Muscle protein</keyword>
<evidence type="ECO:0000250" key="1">
    <source>
        <dbReference type="UniProtKB" id="P02621"/>
    </source>
</evidence>
<evidence type="ECO:0000250" key="2">
    <source>
        <dbReference type="UniProtKB" id="P02622"/>
    </source>
</evidence>
<evidence type="ECO:0000250" key="3">
    <source>
        <dbReference type="UniProtKB" id="P02624"/>
    </source>
</evidence>
<evidence type="ECO:0000255" key="4"/>
<evidence type="ECO:0000255" key="5">
    <source>
        <dbReference type="PROSITE-ProRule" id="PRU00448"/>
    </source>
</evidence>
<evidence type="ECO:0000269" key="6">
    <source>
    </source>
</evidence>
<evidence type="ECO:0000303" key="7">
    <source>
    </source>
</evidence>
<evidence type="ECO:0000305" key="8"/>
<proteinExistence type="evidence at protein level"/>
<dbReference type="SMR" id="P86767"/>
<dbReference type="Allergome" id="7643">
    <property type="allergen name" value="Mer mr 1"/>
</dbReference>
<dbReference type="iPTMnet" id="P86767"/>
<dbReference type="GO" id="GO:0005737">
    <property type="term" value="C:cytoplasm"/>
    <property type="evidence" value="ECO:0007669"/>
    <property type="project" value="TreeGrafter"/>
</dbReference>
<dbReference type="GO" id="GO:0005509">
    <property type="term" value="F:calcium ion binding"/>
    <property type="evidence" value="ECO:0007669"/>
    <property type="project" value="InterPro"/>
</dbReference>
<dbReference type="Gene3D" id="1.10.238.10">
    <property type="entry name" value="EF-hand"/>
    <property type="match status" value="1"/>
</dbReference>
<dbReference type="InterPro" id="IPR011992">
    <property type="entry name" value="EF-hand-dom_pair"/>
</dbReference>
<dbReference type="InterPro" id="IPR018247">
    <property type="entry name" value="EF_Hand_1_Ca_BS"/>
</dbReference>
<dbReference type="InterPro" id="IPR002048">
    <property type="entry name" value="EF_hand_dom"/>
</dbReference>
<dbReference type="InterPro" id="IPR008080">
    <property type="entry name" value="Parvalbumin"/>
</dbReference>
<dbReference type="PANTHER" id="PTHR11653:SF12">
    <property type="entry name" value="PARVALBUMIN"/>
    <property type="match status" value="1"/>
</dbReference>
<dbReference type="PANTHER" id="PTHR11653">
    <property type="entry name" value="PARVALBUMIN ALPHA"/>
    <property type="match status" value="1"/>
</dbReference>
<dbReference type="Pfam" id="PF13405">
    <property type="entry name" value="EF-hand_6"/>
    <property type="match status" value="1"/>
</dbReference>
<dbReference type="PRINTS" id="PR01697">
    <property type="entry name" value="PARVALBUMIN"/>
</dbReference>
<dbReference type="SMART" id="SM00054">
    <property type="entry name" value="EFh"/>
    <property type="match status" value="1"/>
</dbReference>
<dbReference type="SUPFAM" id="SSF47473">
    <property type="entry name" value="EF-hand"/>
    <property type="match status" value="1"/>
</dbReference>
<dbReference type="PROSITE" id="PS00018">
    <property type="entry name" value="EF_HAND_1"/>
    <property type="match status" value="1"/>
</dbReference>
<dbReference type="PROSITE" id="PS50222">
    <property type="entry name" value="EF_HAND_2"/>
    <property type="match status" value="1"/>
</dbReference>
<sequence length="69" mass="7440">AFAGVLADADIKAALAGCAAAESFNYKTFFKFFAIIDQDHSGFIEEEELKLFLQTFSAGARALSDAETK</sequence>
<accession>P86767</accession>
<comment type="function">
    <text evidence="2 3">In muscle, parvalbumin is thought to be involved in relaxation after contraction. It binds two calcium ions (By similarity).</text>
</comment>
<comment type="miscellaneous">
    <text evidence="2 6">Is regarded as an important allergen.</text>
</comment>
<comment type="miscellaneous">
    <text evidence="6">On the 2D-gel the determined pI of this protein is: 4.02, its MW is: 11.39 kDa.</text>
</comment>
<comment type="similarity">
    <text evidence="4">Belongs to the parvalbumin family.</text>
</comment>
<organism>
    <name type="scientific">Merluccius merluccius</name>
    <name type="common">European hake</name>
    <dbReference type="NCBI Taxonomy" id="8063"/>
    <lineage>
        <taxon>Eukaryota</taxon>
        <taxon>Metazoa</taxon>
        <taxon>Chordata</taxon>
        <taxon>Craniata</taxon>
        <taxon>Vertebrata</taxon>
        <taxon>Euteleostomi</taxon>
        <taxon>Actinopterygii</taxon>
        <taxon>Neopterygii</taxon>
        <taxon>Teleostei</taxon>
        <taxon>Neoteleostei</taxon>
        <taxon>Acanthomorphata</taxon>
        <taxon>Zeiogadaria</taxon>
        <taxon>Gadariae</taxon>
        <taxon>Gadiformes</taxon>
        <taxon>Gadoidei</taxon>
        <taxon>Merlucciidae</taxon>
        <taxon>Merluccius</taxon>
    </lineage>
</organism>
<feature type="chain" id="PRO_0000399427" description="Parvalbumin beta 4">
    <location>
        <begin position="1"/>
        <end position="69" status="greater than"/>
    </location>
</feature>
<feature type="domain" description="EF-hand" evidence="5">
    <location>
        <begin position="24"/>
        <end position="59"/>
    </location>
</feature>
<feature type="binding site" evidence="5">
    <location>
        <position position="37"/>
    </location>
    <ligand>
        <name>Ca(2+)</name>
        <dbReference type="ChEBI" id="CHEBI:29108"/>
        <label>1</label>
    </ligand>
</feature>
<feature type="binding site" evidence="5">
    <location>
        <position position="39"/>
    </location>
    <ligand>
        <name>Ca(2+)</name>
        <dbReference type="ChEBI" id="CHEBI:29108"/>
        <label>1</label>
    </ligand>
</feature>
<feature type="binding site" evidence="5">
    <location>
        <position position="41"/>
    </location>
    <ligand>
        <name>Ca(2+)</name>
        <dbReference type="ChEBI" id="CHEBI:29108"/>
        <label>1</label>
    </ligand>
</feature>
<feature type="binding site" evidence="1">
    <location>
        <position position="43"/>
    </location>
    <ligand>
        <name>Ca(2+)</name>
        <dbReference type="ChEBI" id="CHEBI:29108"/>
        <label>1</label>
    </ligand>
</feature>
<feature type="binding site" evidence="1">
    <location>
        <position position="45"/>
    </location>
    <ligand>
        <name>Ca(2+)</name>
        <dbReference type="ChEBI" id="CHEBI:29108"/>
        <label>1</label>
    </ligand>
</feature>
<feature type="binding site" evidence="5">
    <location>
        <position position="48"/>
    </location>
    <ligand>
        <name>Ca(2+)</name>
        <dbReference type="ChEBI" id="CHEBI:29108"/>
        <label>1</label>
    </ligand>
</feature>
<feature type="modified residue" description="N-acetylalanine" evidence="6">
    <location>
        <position position="1"/>
    </location>
</feature>
<feature type="unsure residue" description="L or I" evidence="6">
    <location>
        <position position="6"/>
    </location>
</feature>
<feature type="unsure residue" description="I or L" evidence="6">
    <location>
        <position position="11"/>
    </location>
</feature>
<feature type="unsure residue" description="K or Q" evidence="6">
    <location>
        <position position="12"/>
    </location>
</feature>
<feature type="unsure residue" description="L or I" evidence="6">
    <location>
        <position position="15"/>
    </location>
</feature>
<feature type="unsure residue" description="K or Q" evidence="6">
    <location>
        <position position="27"/>
    </location>
</feature>
<feature type="unsure residue" description="K or Q" evidence="6">
    <location>
        <position position="31"/>
    </location>
</feature>
<feature type="unsure residue" description="I or L" evidence="6">
    <location>
        <position position="35"/>
    </location>
</feature>
<feature type="unsure residue" description="I or L" evidence="6">
    <location>
        <position position="36"/>
    </location>
</feature>
<feature type="unsure residue" description="Q or K" evidence="6">
    <location>
        <position position="38"/>
    </location>
</feature>
<feature type="unsure residue" description="I or L" evidence="6">
    <location>
        <position position="44"/>
    </location>
</feature>
<feature type="unsure residue" description="L or I" evidence="6">
    <location>
        <position position="49"/>
    </location>
</feature>
<feature type="unsure residue" description="K or Q" evidence="6">
    <location>
        <position position="50"/>
    </location>
</feature>
<feature type="unsure residue" description="L or I" evidence="6">
    <location>
        <position position="51"/>
    </location>
</feature>
<feature type="unsure residue" description="L or I" evidence="6">
    <location>
        <position position="53"/>
    </location>
</feature>
<feature type="unsure residue" description="Q or K" evidence="6">
    <location>
        <position position="54"/>
    </location>
</feature>
<feature type="unsure residue" description="L or I" evidence="6">
    <location>
        <position position="63"/>
    </location>
</feature>
<feature type="unsure residue" description="K or Q" evidence="6">
    <location>
        <position position="69"/>
    </location>
</feature>
<feature type="non-consecutive residues" evidence="7">
    <location>
        <begin position="31"/>
        <end position="32"/>
    </location>
</feature>
<feature type="non-terminal residue" evidence="7">
    <location>
        <position position="69"/>
    </location>
</feature>
<reference evidence="8" key="1">
    <citation type="journal article" date="2010" name="J. Proteome Res.">
        <title>Extensive de novo sequencing of new parvalbumin isoforms using a novel combination of bottom-up proteomics, accurate molecular mass measurement by FTICR-MS, and selected MS/MS ion monitoring.</title>
        <authorList>
            <person name="Carrera M."/>
            <person name="Canas B."/>
            <person name="Vazquez J."/>
            <person name="Gallardo J.M."/>
        </authorList>
    </citation>
    <scope>PROTEIN SEQUENCE</scope>
    <scope>ACETYLATION AT ALA-1</scope>
    <source>
        <tissue evidence="6">Muscle</tissue>
    </source>
</reference>
<name>PRVB4_MERME</name>